<name>MNME_GRABC</name>
<evidence type="ECO:0000255" key="1">
    <source>
        <dbReference type="HAMAP-Rule" id="MF_00379"/>
    </source>
</evidence>
<gene>
    <name evidence="1" type="primary">mnmE</name>
    <name evidence="1" type="synonym">trmE</name>
    <name type="ordered locus">GbCGDNIH1_0012</name>
</gene>
<dbReference type="EC" id="3.6.-.-" evidence="1"/>
<dbReference type="EMBL" id="CP000394">
    <property type="protein sequence ID" value="ABI60910.1"/>
    <property type="molecule type" value="Genomic_DNA"/>
</dbReference>
<dbReference type="RefSeq" id="WP_011630720.1">
    <property type="nucleotide sequence ID" value="NC_008343.2"/>
</dbReference>
<dbReference type="SMR" id="Q0BW92"/>
<dbReference type="STRING" id="391165.GbCGDNIH1_0012"/>
<dbReference type="KEGG" id="gbe:GbCGDNIH1_0012"/>
<dbReference type="eggNOG" id="COG0486">
    <property type="taxonomic scope" value="Bacteria"/>
</dbReference>
<dbReference type="HOGENOM" id="CLU_019624_3_1_5"/>
<dbReference type="OrthoDB" id="9805918at2"/>
<dbReference type="Proteomes" id="UP000001963">
    <property type="component" value="Chromosome"/>
</dbReference>
<dbReference type="GO" id="GO:0005737">
    <property type="term" value="C:cytoplasm"/>
    <property type="evidence" value="ECO:0007669"/>
    <property type="project" value="UniProtKB-SubCell"/>
</dbReference>
<dbReference type="GO" id="GO:0005525">
    <property type="term" value="F:GTP binding"/>
    <property type="evidence" value="ECO:0007669"/>
    <property type="project" value="UniProtKB-UniRule"/>
</dbReference>
<dbReference type="GO" id="GO:0003924">
    <property type="term" value="F:GTPase activity"/>
    <property type="evidence" value="ECO:0007669"/>
    <property type="project" value="UniProtKB-UniRule"/>
</dbReference>
<dbReference type="GO" id="GO:0046872">
    <property type="term" value="F:metal ion binding"/>
    <property type="evidence" value="ECO:0007669"/>
    <property type="project" value="UniProtKB-KW"/>
</dbReference>
<dbReference type="GO" id="GO:0030488">
    <property type="term" value="P:tRNA methylation"/>
    <property type="evidence" value="ECO:0007669"/>
    <property type="project" value="TreeGrafter"/>
</dbReference>
<dbReference type="GO" id="GO:0002098">
    <property type="term" value="P:tRNA wobble uridine modification"/>
    <property type="evidence" value="ECO:0007669"/>
    <property type="project" value="TreeGrafter"/>
</dbReference>
<dbReference type="CDD" id="cd04164">
    <property type="entry name" value="trmE"/>
    <property type="match status" value="1"/>
</dbReference>
<dbReference type="CDD" id="cd14858">
    <property type="entry name" value="TrmE_N"/>
    <property type="match status" value="1"/>
</dbReference>
<dbReference type="FunFam" id="3.30.1360.120:FF:000007">
    <property type="entry name" value="tRNA modification GTPase GTPBP3, mitochondrial"/>
    <property type="match status" value="1"/>
</dbReference>
<dbReference type="Gene3D" id="3.40.50.300">
    <property type="entry name" value="P-loop containing nucleotide triphosphate hydrolases"/>
    <property type="match status" value="1"/>
</dbReference>
<dbReference type="Gene3D" id="3.30.1360.120">
    <property type="entry name" value="Probable tRNA modification gtpase trme, domain 1"/>
    <property type="match status" value="1"/>
</dbReference>
<dbReference type="Gene3D" id="1.20.120.430">
    <property type="entry name" value="tRNA modification GTPase MnmE domain 2"/>
    <property type="match status" value="1"/>
</dbReference>
<dbReference type="HAMAP" id="MF_00379">
    <property type="entry name" value="GTPase_MnmE"/>
    <property type="match status" value="1"/>
</dbReference>
<dbReference type="InterPro" id="IPR031168">
    <property type="entry name" value="G_TrmE"/>
</dbReference>
<dbReference type="InterPro" id="IPR006073">
    <property type="entry name" value="GTP-bd"/>
</dbReference>
<dbReference type="InterPro" id="IPR018948">
    <property type="entry name" value="GTP-bd_TrmE_N"/>
</dbReference>
<dbReference type="InterPro" id="IPR004520">
    <property type="entry name" value="GTPase_MnmE"/>
</dbReference>
<dbReference type="InterPro" id="IPR027368">
    <property type="entry name" value="MnmE_dom2"/>
</dbReference>
<dbReference type="InterPro" id="IPR025867">
    <property type="entry name" value="MnmE_helical"/>
</dbReference>
<dbReference type="InterPro" id="IPR027417">
    <property type="entry name" value="P-loop_NTPase"/>
</dbReference>
<dbReference type="InterPro" id="IPR005225">
    <property type="entry name" value="Small_GTP-bd"/>
</dbReference>
<dbReference type="InterPro" id="IPR027266">
    <property type="entry name" value="TrmE/GcvT_dom1"/>
</dbReference>
<dbReference type="NCBIfam" id="TIGR00450">
    <property type="entry name" value="mnmE_trmE_thdF"/>
    <property type="match status" value="1"/>
</dbReference>
<dbReference type="NCBIfam" id="NF003661">
    <property type="entry name" value="PRK05291.1-3"/>
    <property type="match status" value="1"/>
</dbReference>
<dbReference type="NCBIfam" id="TIGR00231">
    <property type="entry name" value="small_GTP"/>
    <property type="match status" value="1"/>
</dbReference>
<dbReference type="PANTHER" id="PTHR42714">
    <property type="entry name" value="TRNA MODIFICATION GTPASE GTPBP3"/>
    <property type="match status" value="1"/>
</dbReference>
<dbReference type="PANTHER" id="PTHR42714:SF2">
    <property type="entry name" value="TRNA MODIFICATION GTPASE GTPBP3, MITOCHONDRIAL"/>
    <property type="match status" value="1"/>
</dbReference>
<dbReference type="Pfam" id="PF01926">
    <property type="entry name" value="MMR_HSR1"/>
    <property type="match status" value="1"/>
</dbReference>
<dbReference type="Pfam" id="PF12631">
    <property type="entry name" value="MnmE_helical"/>
    <property type="match status" value="1"/>
</dbReference>
<dbReference type="Pfam" id="PF10396">
    <property type="entry name" value="TrmE_N"/>
    <property type="match status" value="1"/>
</dbReference>
<dbReference type="SUPFAM" id="SSF52540">
    <property type="entry name" value="P-loop containing nucleoside triphosphate hydrolases"/>
    <property type="match status" value="1"/>
</dbReference>
<dbReference type="PROSITE" id="PS51709">
    <property type="entry name" value="G_TRME"/>
    <property type="match status" value="1"/>
</dbReference>
<sequence>MSQETIFALASGAGRAAIAVIRISGPATRNTVTHLCGTLPPQRKSSLRRLRNRSGEILDQGIILWFAGPGSFTGEDCAELHLHGGNAVIEGMADALVDLGLRPAEAGEFTRRAFLNGKLDLTEAEAVADLIDAETSAQRRQALQQLDGGLSRQLETWTATLTRVLAWQETLIDFPDEDLPAEVDAALRTDLLLLRQEMAQALNEGAKAEKLREGLIFTILGKPNAGKSSLLNSLASRDAAIVSSQPGTTRDTIEVRLVLAGVPVTLIDTAGLRDSADSIEAEGVRRALARAESADLVLRTVDISTATEADFSAEQWPGSSEARSLMIGTKSDLPYTPPSSPDIVLVSTLTGDGMERLKTMLEAEARALTSHATGAPLTRARHRAALQDAIQHLEDAESARLEELRAEEIRLARQAVGRVTGQIGVEQILDHVFSSFCIGK</sequence>
<reference key="1">
    <citation type="journal article" date="2007" name="J. Bacteriol.">
        <title>Genome sequence analysis of the emerging human pathogenic acetic acid bacterium Granulibacter bethesdensis.</title>
        <authorList>
            <person name="Greenberg D.E."/>
            <person name="Porcella S.F."/>
            <person name="Zelazny A.M."/>
            <person name="Virtaneva K."/>
            <person name="Sturdevant D.E."/>
            <person name="Kupko J.J. III"/>
            <person name="Barbian K.D."/>
            <person name="Babar A."/>
            <person name="Dorward D.W."/>
            <person name="Holland S.M."/>
        </authorList>
    </citation>
    <scope>NUCLEOTIDE SEQUENCE [LARGE SCALE GENOMIC DNA]</scope>
    <source>
        <strain>ATCC BAA-1260 / CGDNIH1</strain>
    </source>
</reference>
<protein>
    <recommendedName>
        <fullName evidence="1">tRNA modification GTPase MnmE</fullName>
        <ecNumber evidence="1">3.6.-.-</ecNumber>
    </recommendedName>
</protein>
<accession>Q0BW92</accession>
<proteinExistence type="inferred from homology"/>
<organism>
    <name type="scientific">Granulibacter bethesdensis (strain ATCC BAA-1260 / CGDNIH1)</name>
    <dbReference type="NCBI Taxonomy" id="391165"/>
    <lineage>
        <taxon>Bacteria</taxon>
        <taxon>Pseudomonadati</taxon>
        <taxon>Pseudomonadota</taxon>
        <taxon>Alphaproteobacteria</taxon>
        <taxon>Acetobacterales</taxon>
        <taxon>Acetobacteraceae</taxon>
        <taxon>Granulibacter</taxon>
    </lineage>
</organism>
<comment type="function">
    <text evidence="1">Exhibits a very high intrinsic GTPase hydrolysis rate. Involved in the addition of a carboxymethylaminomethyl (cmnm) group at the wobble position (U34) of certain tRNAs, forming tRNA-cmnm(5)s(2)U34.</text>
</comment>
<comment type="cofactor">
    <cofactor evidence="1">
        <name>K(+)</name>
        <dbReference type="ChEBI" id="CHEBI:29103"/>
    </cofactor>
    <text evidence="1">Binds 1 potassium ion per subunit.</text>
</comment>
<comment type="subunit">
    <text evidence="1">Homodimer. Heterotetramer of two MnmE and two MnmG subunits.</text>
</comment>
<comment type="subcellular location">
    <subcellularLocation>
        <location evidence="1">Cytoplasm</location>
    </subcellularLocation>
</comment>
<comment type="similarity">
    <text evidence="1">Belongs to the TRAFAC class TrmE-Era-EngA-EngB-Septin-like GTPase superfamily. TrmE GTPase family.</text>
</comment>
<feature type="chain" id="PRO_0000345794" description="tRNA modification GTPase MnmE">
    <location>
        <begin position="1"/>
        <end position="440"/>
    </location>
</feature>
<feature type="domain" description="TrmE-type G">
    <location>
        <begin position="214"/>
        <end position="366"/>
    </location>
</feature>
<feature type="binding site" evidence="1">
    <location>
        <position position="22"/>
    </location>
    <ligand>
        <name>(6S)-5-formyl-5,6,7,8-tetrahydrofolate</name>
        <dbReference type="ChEBI" id="CHEBI:57457"/>
    </ligand>
</feature>
<feature type="binding site" evidence="1">
    <location>
        <position position="79"/>
    </location>
    <ligand>
        <name>(6S)-5-formyl-5,6,7,8-tetrahydrofolate</name>
        <dbReference type="ChEBI" id="CHEBI:57457"/>
    </ligand>
</feature>
<feature type="binding site" evidence="1">
    <location>
        <position position="118"/>
    </location>
    <ligand>
        <name>(6S)-5-formyl-5,6,7,8-tetrahydrofolate</name>
        <dbReference type="ChEBI" id="CHEBI:57457"/>
    </ligand>
</feature>
<feature type="binding site" evidence="1">
    <location>
        <begin position="224"/>
        <end position="229"/>
    </location>
    <ligand>
        <name>GTP</name>
        <dbReference type="ChEBI" id="CHEBI:37565"/>
    </ligand>
</feature>
<feature type="binding site" evidence="1">
    <location>
        <position position="228"/>
    </location>
    <ligand>
        <name>Mg(2+)</name>
        <dbReference type="ChEBI" id="CHEBI:18420"/>
    </ligand>
</feature>
<feature type="binding site" evidence="1">
    <location>
        <begin position="243"/>
        <end position="249"/>
    </location>
    <ligand>
        <name>GTP</name>
        <dbReference type="ChEBI" id="CHEBI:37565"/>
    </ligand>
</feature>
<feature type="binding site" evidence="1">
    <location>
        <position position="249"/>
    </location>
    <ligand>
        <name>Mg(2+)</name>
        <dbReference type="ChEBI" id="CHEBI:18420"/>
    </ligand>
</feature>
<feature type="binding site" evidence="1">
    <location>
        <begin position="268"/>
        <end position="271"/>
    </location>
    <ligand>
        <name>GTP</name>
        <dbReference type="ChEBI" id="CHEBI:37565"/>
    </ligand>
</feature>
<feature type="binding site" evidence="1">
    <location>
        <position position="440"/>
    </location>
    <ligand>
        <name>(6S)-5-formyl-5,6,7,8-tetrahydrofolate</name>
        <dbReference type="ChEBI" id="CHEBI:57457"/>
    </ligand>
</feature>
<keyword id="KW-0963">Cytoplasm</keyword>
<keyword id="KW-0342">GTP-binding</keyword>
<keyword id="KW-0378">Hydrolase</keyword>
<keyword id="KW-0460">Magnesium</keyword>
<keyword id="KW-0479">Metal-binding</keyword>
<keyword id="KW-0547">Nucleotide-binding</keyword>
<keyword id="KW-0630">Potassium</keyword>
<keyword id="KW-1185">Reference proteome</keyword>
<keyword id="KW-0819">tRNA processing</keyword>